<sequence length="102" mass="11631">MGKTGSVEHTKQRIESELMPPSMYKVILNNDDYTPMDFVIEVLARFFDKHEPQATDIMLTIHHQGKGICGVYPFGIAETKVLQVNQFARENQHPLLCTLEKA</sequence>
<proteinExistence type="inferred from homology"/>
<name>CLPS_SHEDO</name>
<organism>
    <name type="scientific">Shewanella denitrificans (strain OS217 / ATCC BAA-1090 / DSM 15013)</name>
    <dbReference type="NCBI Taxonomy" id="318161"/>
    <lineage>
        <taxon>Bacteria</taxon>
        <taxon>Pseudomonadati</taxon>
        <taxon>Pseudomonadota</taxon>
        <taxon>Gammaproteobacteria</taxon>
        <taxon>Alteromonadales</taxon>
        <taxon>Shewanellaceae</taxon>
        <taxon>Shewanella</taxon>
    </lineage>
</organism>
<keyword id="KW-1185">Reference proteome</keyword>
<accession>Q12N59</accession>
<gene>
    <name evidence="1" type="primary">clpS</name>
    <name type="ordered locus">Sden_1833</name>
</gene>
<feature type="chain" id="PRO_0000300724" description="ATP-dependent Clp protease adapter protein ClpS">
    <location>
        <begin position="1"/>
        <end position="102"/>
    </location>
</feature>
<comment type="function">
    <text evidence="1">Involved in the modulation of the specificity of the ClpAP-mediated ATP-dependent protein degradation.</text>
</comment>
<comment type="subunit">
    <text evidence="1">Binds to the N-terminal domain of the chaperone ClpA.</text>
</comment>
<comment type="similarity">
    <text evidence="1">Belongs to the ClpS family.</text>
</comment>
<dbReference type="EMBL" id="CP000302">
    <property type="protein sequence ID" value="ABE55117.1"/>
    <property type="molecule type" value="Genomic_DNA"/>
</dbReference>
<dbReference type="RefSeq" id="WP_011496274.1">
    <property type="nucleotide sequence ID" value="NC_007954.1"/>
</dbReference>
<dbReference type="SMR" id="Q12N59"/>
<dbReference type="STRING" id="318161.Sden_1833"/>
<dbReference type="KEGG" id="sdn:Sden_1833"/>
<dbReference type="eggNOG" id="COG2127">
    <property type="taxonomic scope" value="Bacteria"/>
</dbReference>
<dbReference type="HOGENOM" id="CLU_134358_2_1_6"/>
<dbReference type="OrthoDB" id="9796121at2"/>
<dbReference type="Proteomes" id="UP000001982">
    <property type="component" value="Chromosome"/>
</dbReference>
<dbReference type="GO" id="GO:0030163">
    <property type="term" value="P:protein catabolic process"/>
    <property type="evidence" value="ECO:0007669"/>
    <property type="project" value="InterPro"/>
</dbReference>
<dbReference type="GO" id="GO:0006508">
    <property type="term" value="P:proteolysis"/>
    <property type="evidence" value="ECO:0007669"/>
    <property type="project" value="UniProtKB-UniRule"/>
</dbReference>
<dbReference type="FunFam" id="3.30.1390.10:FF:000002">
    <property type="entry name" value="ATP-dependent Clp protease adapter protein ClpS"/>
    <property type="match status" value="1"/>
</dbReference>
<dbReference type="Gene3D" id="3.30.1390.10">
    <property type="match status" value="1"/>
</dbReference>
<dbReference type="HAMAP" id="MF_00302">
    <property type="entry name" value="ClpS"/>
    <property type="match status" value="1"/>
</dbReference>
<dbReference type="InterPro" id="IPR022935">
    <property type="entry name" value="ClpS"/>
</dbReference>
<dbReference type="InterPro" id="IPR003769">
    <property type="entry name" value="ClpS_core"/>
</dbReference>
<dbReference type="InterPro" id="IPR014719">
    <property type="entry name" value="Ribosomal_bL12_C/ClpS-like"/>
</dbReference>
<dbReference type="NCBIfam" id="NF000670">
    <property type="entry name" value="PRK00033.1-3"/>
    <property type="match status" value="1"/>
</dbReference>
<dbReference type="NCBIfam" id="NF000672">
    <property type="entry name" value="PRK00033.1-5"/>
    <property type="match status" value="1"/>
</dbReference>
<dbReference type="PANTHER" id="PTHR33473:SF19">
    <property type="entry name" value="ATP-DEPENDENT CLP PROTEASE ADAPTER PROTEIN CLPS"/>
    <property type="match status" value="1"/>
</dbReference>
<dbReference type="PANTHER" id="PTHR33473">
    <property type="entry name" value="ATP-DEPENDENT CLP PROTEASE ADAPTER PROTEIN CLPS1, CHLOROPLASTIC"/>
    <property type="match status" value="1"/>
</dbReference>
<dbReference type="Pfam" id="PF02617">
    <property type="entry name" value="ClpS"/>
    <property type="match status" value="1"/>
</dbReference>
<dbReference type="SUPFAM" id="SSF54736">
    <property type="entry name" value="ClpS-like"/>
    <property type="match status" value="1"/>
</dbReference>
<evidence type="ECO:0000255" key="1">
    <source>
        <dbReference type="HAMAP-Rule" id="MF_00302"/>
    </source>
</evidence>
<protein>
    <recommendedName>
        <fullName evidence="1">ATP-dependent Clp protease adapter protein ClpS</fullName>
    </recommendedName>
</protein>
<reference key="1">
    <citation type="submission" date="2006-03" db="EMBL/GenBank/DDBJ databases">
        <title>Complete sequence of Shewanella denitrificans OS217.</title>
        <authorList>
            <consortium name="US DOE Joint Genome Institute"/>
            <person name="Copeland A."/>
            <person name="Lucas S."/>
            <person name="Lapidus A."/>
            <person name="Barry K."/>
            <person name="Detter J.C."/>
            <person name="Glavina del Rio T."/>
            <person name="Hammon N."/>
            <person name="Israni S."/>
            <person name="Dalin E."/>
            <person name="Tice H."/>
            <person name="Pitluck S."/>
            <person name="Brettin T."/>
            <person name="Bruce D."/>
            <person name="Han C."/>
            <person name="Tapia R."/>
            <person name="Gilna P."/>
            <person name="Kiss H."/>
            <person name="Schmutz J."/>
            <person name="Larimer F."/>
            <person name="Land M."/>
            <person name="Hauser L."/>
            <person name="Kyrpides N."/>
            <person name="Lykidis A."/>
            <person name="Richardson P."/>
        </authorList>
    </citation>
    <scope>NUCLEOTIDE SEQUENCE [LARGE SCALE GENOMIC DNA]</scope>
    <source>
        <strain>OS217 / ATCC BAA-1090 / DSM 15013</strain>
    </source>
</reference>